<dbReference type="EC" id="3.1.1.29" evidence="1"/>
<dbReference type="EMBL" id="BA000002">
    <property type="protein sequence ID" value="BAA80662.1"/>
    <property type="molecule type" value="Genomic_DNA"/>
</dbReference>
<dbReference type="PIR" id="A72547">
    <property type="entry name" value="A72547"/>
</dbReference>
<dbReference type="RefSeq" id="WP_010866515.1">
    <property type="nucleotide sequence ID" value="NC_000854.2"/>
</dbReference>
<dbReference type="SMR" id="Q9YBD6"/>
<dbReference type="STRING" id="272557.APE_1661"/>
<dbReference type="EnsemblBacteria" id="BAA80662">
    <property type="protein sequence ID" value="BAA80662"/>
    <property type="gene ID" value="APE_1661"/>
</dbReference>
<dbReference type="GeneID" id="1446157"/>
<dbReference type="KEGG" id="ape:APE_1661"/>
<dbReference type="eggNOG" id="arCOG04228">
    <property type="taxonomic scope" value="Archaea"/>
</dbReference>
<dbReference type="Proteomes" id="UP000002518">
    <property type="component" value="Chromosome"/>
</dbReference>
<dbReference type="GO" id="GO:0005829">
    <property type="term" value="C:cytosol"/>
    <property type="evidence" value="ECO:0007669"/>
    <property type="project" value="TreeGrafter"/>
</dbReference>
<dbReference type="GO" id="GO:0004045">
    <property type="term" value="F:peptidyl-tRNA hydrolase activity"/>
    <property type="evidence" value="ECO:0007669"/>
    <property type="project" value="UniProtKB-UniRule"/>
</dbReference>
<dbReference type="GO" id="GO:0006412">
    <property type="term" value="P:translation"/>
    <property type="evidence" value="ECO:0007669"/>
    <property type="project" value="UniProtKB-UniRule"/>
</dbReference>
<dbReference type="CDD" id="cd02430">
    <property type="entry name" value="PTH2"/>
    <property type="match status" value="1"/>
</dbReference>
<dbReference type="FunFam" id="3.40.1490.10:FF:000001">
    <property type="entry name" value="Peptidyl-tRNA hydrolase 2"/>
    <property type="match status" value="1"/>
</dbReference>
<dbReference type="Gene3D" id="3.40.1490.10">
    <property type="entry name" value="Bit1"/>
    <property type="match status" value="1"/>
</dbReference>
<dbReference type="HAMAP" id="MF_00628">
    <property type="entry name" value="Pept_tRNA_hydro_arch"/>
    <property type="match status" value="1"/>
</dbReference>
<dbReference type="InterPro" id="IPR023476">
    <property type="entry name" value="Pep_tRNA_hydro_II_dom_sf"/>
</dbReference>
<dbReference type="InterPro" id="IPR034759">
    <property type="entry name" value="Pept_tRNA_hydro_arch"/>
</dbReference>
<dbReference type="InterPro" id="IPR002833">
    <property type="entry name" value="PTH2"/>
</dbReference>
<dbReference type="NCBIfam" id="TIGR00283">
    <property type="entry name" value="arch_pth2"/>
    <property type="match status" value="1"/>
</dbReference>
<dbReference type="NCBIfam" id="NF003314">
    <property type="entry name" value="PRK04322.1"/>
    <property type="match status" value="1"/>
</dbReference>
<dbReference type="PANTHER" id="PTHR12649">
    <property type="entry name" value="PEPTIDYL-TRNA HYDROLASE 2"/>
    <property type="match status" value="1"/>
</dbReference>
<dbReference type="PANTHER" id="PTHR12649:SF11">
    <property type="entry name" value="PEPTIDYL-TRNA HYDROLASE 2, MITOCHONDRIAL"/>
    <property type="match status" value="1"/>
</dbReference>
<dbReference type="Pfam" id="PF01981">
    <property type="entry name" value="PTH2"/>
    <property type="match status" value="1"/>
</dbReference>
<dbReference type="SUPFAM" id="SSF102462">
    <property type="entry name" value="Peptidyl-tRNA hydrolase II"/>
    <property type="match status" value="1"/>
</dbReference>
<gene>
    <name evidence="1" type="primary">pth</name>
    <name type="ordered locus">APE_1661</name>
</gene>
<proteinExistence type="inferred from homology"/>
<organism>
    <name type="scientific">Aeropyrum pernix (strain ATCC 700893 / DSM 11879 / JCM 9820 / NBRC 100138 / K1)</name>
    <dbReference type="NCBI Taxonomy" id="272557"/>
    <lineage>
        <taxon>Archaea</taxon>
        <taxon>Thermoproteota</taxon>
        <taxon>Thermoprotei</taxon>
        <taxon>Desulfurococcales</taxon>
        <taxon>Desulfurococcaceae</taxon>
        <taxon>Aeropyrum</taxon>
    </lineage>
</organism>
<feature type="chain" id="PRO_0000120287" description="Peptidyl-tRNA hydrolase">
    <location>
        <begin position="1"/>
        <end position="124"/>
    </location>
</feature>
<keyword id="KW-0963">Cytoplasm</keyword>
<keyword id="KW-0378">Hydrolase</keyword>
<keyword id="KW-1185">Reference proteome</keyword>
<evidence type="ECO:0000255" key="1">
    <source>
        <dbReference type="HAMAP-Rule" id="MF_00628"/>
    </source>
</evidence>
<reference key="1">
    <citation type="journal article" date="1999" name="DNA Res.">
        <title>Complete genome sequence of an aerobic hyper-thermophilic crenarchaeon, Aeropyrum pernix K1.</title>
        <authorList>
            <person name="Kawarabayasi Y."/>
            <person name="Hino Y."/>
            <person name="Horikawa H."/>
            <person name="Yamazaki S."/>
            <person name="Haikawa Y."/>
            <person name="Jin-no K."/>
            <person name="Takahashi M."/>
            <person name="Sekine M."/>
            <person name="Baba S."/>
            <person name="Ankai A."/>
            <person name="Kosugi H."/>
            <person name="Hosoyama A."/>
            <person name="Fukui S."/>
            <person name="Nagai Y."/>
            <person name="Nishijima K."/>
            <person name="Nakazawa H."/>
            <person name="Takamiya M."/>
            <person name="Masuda S."/>
            <person name="Funahashi T."/>
            <person name="Tanaka T."/>
            <person name="Kudoh Y."/>
            <person name="Yamazaki J."/>
            <person name="Kushida N."/>
            <person name="Oguchi A."/>
            <person name="Aoki K."/>
            <person name="Kubota K."/>
            <person name="Nakamura Y."/>
            <person name="Nomura N."/>
            <person name="Sako Y."/>
            <person name="Kikuchi H."/>
        </authorList>
    </citation>
    <scope>NUCLEOTIDE SEQUENCE [LARGE SCALE GENOMIC DNA]</scope>
    <source>
        <strain>ATCC 700893 / DSM 11879 / JCM 9820 / NBRC 100138 / K1</strain>
    </source>
</reference>
<name>PTH_AERPE</name>
<comment type="function">
    <text evidence="1">The natural substrate for this enzyme may be peptidyl-tRNAs which drop off the ribosome during protein synthesis.</text>
</comment>
<comment type="catalytic activity">
    <reaction evidence="1">
        <text>an N-acyl-L-alpha-aminoacyl-tRNA + H2O = an N-acyl-L-amino acid + a tRNA + H(+)</text>
        <dbReference type="Rhea" id="RHEA:54448"/>
        <dbReference type="Rhea" id="RHEA-COMP:10123"/>
        <dbReference type="Rhea" id="RHEA-COMP:13883"/>
        <dbReference type="ChEBI" id="CHEBI:15377"/>
        <dbReference type="ChEBI" id="CHEBI:15378"/>
        <dbReference type="ChEBI" id="CHEBI:59874"/>
        <dbReference type="ChEBI" id="CHEBI:78442"/>
        <dbReference type="ChEBI" id="CHEBI:138191"/>
        <dbReference type="EC" id="3.1.1.29"/>
    </reaction>
</comment>
<comment type="subcellular location">
    <subcellularLocation>
        <location evidence="1">Cytoplasm</location>
    </subcellularLocation>
</comment>
<comment type="similarity">
    <text evidence="1">Belongs to the PTH2 family.</text>
</comment>
<protein>
    <recommendedName>
        <fullName evidence="1">Peptidyl-tRNA hydrolase</fullName>
        <shortName evidence="1">PTH</shortName>
        <ecNumber evidence="1">3.1.1.29</ecNumber>
    </recommendedName>
</protein>
<sequence length="124" mass="13462">MTGEGYKQAIVVRRDLGMGRGKAAAQAAHASCEAVFLILESGRPEWRRWLEMWRLQGQAKVVLRVESLAELQEVYSKAVEEGLPASFVRDAGKTQLEPGTPTAAAVGPAPSRLVDRITGGLKLF</sequence>
<accession>Q9YBD6</accession>